<comment type="function">
    <text evidence="1">Protamines substitute for histones in the chromatin of sperm during the haploid phase of spermatogenesis. They compact sperm DNA into a highly condensed, stable and inactive complex (By similarity).</text>
</comment>
<comment type="subcellular location">
    <subcellularLocation>
        <location evidence="1">Nucleus</location>
    </subcellularLocation>
    <subcellularLocation>
        <location evidence="1">Chromosome</location>
    </subcellularLocation>
</comment>
<comment type="tissue specificity">
    <text>Testis.</text>
</comment>
<comment type="similarity">
    <text evidence="3">Belongs to the protamine P1 family.</text>
</comment>
<name>HSP1_PSENI</name>
<evidence type="ECO:0000250" key="1"/>
<evidence type="ECO:0000256" key="2">
    <source>
        <dbReference type="SAM" id="MobiDB-lite"/>
    </source>
</evidence>
<evidence type="ECO:0000305" key="3"/>
<reference key="1">
    <citation type="journal article" date="1997" name="J. Mammal. Evol.">
        <title>Reconstructing the taxonomic radiation of dasyurine marsupials with cytochrome b, 12S rRNA, and protamine P1 gene trees.</title>
        <authorList>
            <person name="Krajewski C."/>
            <person name="Young J."/>
            <person name="Buckley L."/>
            <person name="Woolley P.A."/>
            <person name="Westerman M."/>
        </authorList>
    </citation>
    <scope>NUCLEOTIDE SEQUENCE [GENOMIC DNA]</scope>
</reference>
<sequence>MARYRRHSRSRSRSRYRRRRRRRSRHRNRRRTYRRSRRHSRRRRGRRRGYSRRRYSRRGRRRY</sequence>
<dbReference type="EMBL" id="AF010278">
    <property type="protein sequence ID" value="AAB69308.1"/>
    <property type="molecule type" value="Genomic_DNA"/>
</dbReference>
<dbReference type="GO" id="GO:0000786">
    <property type="term" value="C:nucleosome"/>
    <property type="evidence" value="ECO:0007669"/>
    <property type="project" value="UniProtKB-KW"/>
</dbReference>
<dbReference type="GO" id="GO:0005634">
    <property type="term" value="C:nucleus"/>
    <property type="evidence" value="ECO:0007669"/>
    <property type="project" value="UniProtKB-SubCell"/>
</dbReference>
<dbReference type="GO" id="GO:0003677">
    <property type="term" value="F:DNA binding"/>
    <property type="evidence" value="ECO:0007669"/>
    <property type="project" value="UniProtKB-KW"/>
</dbReference>
<dbReference type="GO" id="GO:0030261">
    <property type="term" value="P:chromosome condensation"/>
    <property type="evidence" value="ECO:0007669"/>
    <property type="project" value="UniProtKB-KW"/>
</dbReference>
<dbReference type="GO" id="GO:0035092">
    <property type="term" value="P:sperm DNA condensation"/>
    <property type="evidence" value="ECO:0007669"/>
    <property type="project" value="InterPro"/>
</dbReference>
<dbReference type="InterPro" id="IPR000221">
    <property type="entry name" value="Protamine_P1"/>
</dbReference>
<dbReference type="PROSITE" id="PS00048">
    <property type="entry name" value="PROTAMINE_P1"/>
    <property type="match status" value="1"/>
</dbReference>
<proteinExistence type="evidence at transcript level"/>
<gene>
    <name type="primary">PRM1</name>
</gene>
<keyword id="KW-0158">Chromosome</keyword>
<keyword id="KW-0217">Developmental protein</keyword>
<keyword id="KW-0221">Differentiation</keyword>
<keyword id="KW-0226">DNA condensation</keyword>
<keyword id="KW-0238">DNA-binding</keyword>
<keyword id="KW-0544">Nucleosome core</keyword>
<keyword id="KW-0539">Nucleus</keyword>
<keyword id="KW-0744">Spermatogenesis</keyword>
<accession>Q71VG5</accession>
<feature type="chain" id="PRO_0000191544" description="Sperm protamine P1">
    <location>
        <begin position="1"/>
        <end position="63"/>
    </location>
</feature>
<feature type="region of interest" description="Disordered" evidence="2">
    <location>
        <begin position="1"/>
        <end position="63"/>
    </location>
</feature>
<protein>
    <recommendedName>
        <fullName>Sperm protamine P1</fullName>
    </recommendedName>
</protein>
<organism>
    <name type="scientific">Pseudantechinus ningbing</name>
    <name type="common">Ningbing false antechinus</name>
    <dbReference type="NCBI Taxonomy" id="32558"/>
    <lineage>
        <taxon>Eukaryota</taxon>
        <taxon>Metazoa</taxon>
        <taxon>Chordata</taxon>
        <taxon>Craniata</taxon>
        <taxon>Vertebrata</taxon>
        <taxon>Euteleostomi</taxon>
        <taxon>Mammalia</taxon>
        <taxon>Metatheria</taxon>
        <taxon>Dasyuromorphia</taxon>
        <taxon>Dasyuridae</taxon>
        <taxon>Pseudantechinus</taxon>
    </lineage>
</organism>